<keyword id="KW-1003">Cell membrane</keyword>
<keyword id="KW-1015">Disulfide bond</keyword>
<keyword id="KW-0297">G-protein coupled receptor</keyword>
<keyword id="KW-0325">Glycoprotein</keyword>
<keyword id="KW-0472">Membrane</keyword>
<keyword id="KW-0675">Receptor</keyword>
<keyword id="KW-1185">Reference proteome</keyword>
<keyword id="KW-0807">Transducer</keyword>
<keyword id="KW-0812">Transmembrane</keyword>
<keyword id="KW-1133">Transmembrane helix</keyword>
<proteinExistence type="evidence at transcript level"/>
<sequence>MTPNSTGEVPGPIPRGALELSLALASLIIAANLLLALGIACDRRLRSPPAGCFFLSLLLAGLLTGLALPTLPGLWRQSHRGYWSCLLVYLAPNFSFLSLLANLLLVHGERYVAVLRPLQPPGSIRLALLLTWTGPLLFASLPALGWNHWGPEANCSSQTIFPAPYLYLEVYGLLLPAVGAAALLSAHVLLAAHRQLQDIRRLERAVCRDAPSALARALTWRQARAQAGATLLFGLCWGPYVATLFLSVLAYEQRPPLGPGTLLSLLSLGSASAAAVPVAMGLGDHRYTAPWRAAARRWLRGLRGRGSQASPGPSTAYHTSSQSSVDVDLN</sequence>
<accession>Q862A8</accession>
<name>GPBAR_RABIT</name>
<protein>
    <recommendedName>
        <fullName>G-protein coupled bile acid receptor 1</fullName>
    </recommendedName>
</protein>
<reference key="1">
    <citation type="journal article" date="2003" name="J. Biol. Chem.">
        <title>A G protein-coupled receptor responsive to bile acids.</title>
        <authorList>
            <person name="Kawamata Y."/>
            <person name="Fujii R."/>
            <person name="Hosoya M."/>
            <person name="Harada M."/>
            <person name="Yoshida H."/>
            <person name="Miwa M."/>
            <person name="Fukusumi S."/>
            <person name="Habata Y."/>
            <person name="Itoh T."/>
            <person name="Shintani Y."/>
            <person name="Hinuma S."/>
            <person name="Fujisawa Y."/>
            <person name="Fujino M."/>
        </authorList>
    </citation>
    <scope>NUCLEOTIDE SEQUENCE [MRNA]</scope>
    <scope>TISSUE SPECIFICITY</scope>
</reference>
<organism>
    <name type="scientific">Oryctolagus cuniculus</name>
    <name type="common">Rabbit</name>
    <dbReference type="NCBI Taxonomy" id="9986"/>
    <lineage>
        <taxon>Eukaryota</taxon>
        <taxon>Metazoa</taxon>
        <taxon>Chordata</taxon>
        <taxon>Craniata</taxon>
        <taxon>Vertebrata</taxon>
        <taxon>Euteleostomi</taxon>
        <taxon>Mammalia</taxon>
        <taxon>Eutheria</taxon>
        <taxon>Euarchontoglires</taxon>
        <taxon>Glires</taxon>
        <taxon>Lagomorpha</taxon>
        <taxon>Leporidae</taxon>
        <taxon>Oryctolagus</taxon>
    </lineage>
</organism>
<feature type="chain" id="PRO_0000069502" description="G-protein coupled bile acid receptor 1">
    <location>
        <begin position="1"/>
        <end position="330"/>
    </location>
</feature>
<feature type="topological domain" description="Extracellular" evidence="2">
    <location>
        <begin position="1"/>
        <end position="19"/>
    </location>
</feature>
<feature type="transmembrane region" description="Helical; Name=1" evidence="2">
    <location>
        <begin position="20"/>
        <end position="40"/>
    </location>
</feature>
<feature type="topological domain" description="Cytoplasmic" evidence="2">
    <location>
        <begin position="41"/>
        <end position="50"/>
    </location>
</feature>
<feature type="transmembrane region" description="Helical; Name=2" evidence="2">
    <location>
        <begin position="51"/>
        <end position="71"/>
    </location>
</feature>
<feature type="topological domain" description="Extracellular" evidence="2">
    <location>
        <begin position="72"/>
        <end position="85"/>
    </location>
</feature>
<feature type="transmembrane region" description="Helical; Name=3" evidence="2">
    <location>
        <begin position="86"/>
        <end position="106"/>
    </location>
</feature>
<feature type="topological domain" description="Cytoplasmic" evidence="2">
    <location>
        <begin position="107"/>
        <end position="125"/>
    </location>
</feature>
<feature type="transmembrane region" description="Helical; Name=4" evidence="2">
    <location>
        <begin position="126"/>
        <end position="146"/>
    </location>
</feature>
<feature type="topological domain" description="Extracellular" evidence="2">
    <location>
        <begin position="147"/>
        <end position="169"/>
    </location>
</feature>
<feature type="transmembrane region" description="Helical; Name=5" evidence="2">
    <location>
        <begin position="170"/>
        <end position="190"/>
    </location>
</feature>
<feature type="topological domain" description="Cytoplasmic" evidence="2">
    <location>
        <begin position="191"/>
        <end position="230"/>
    </location>
</feature>
<feature type="transmembrane region" description="Helical; Name=6" evidence="2">
    <location>
        <begin position="231"/>
        <end position="251"/>
    </location>
</feature>
<feature type="topological domain" description="Extracellular" evidence="2">
    <location>
        <begin position="252"/>
        <end position="261"/>
    </location>
</feature>
<feature type="transmembrane region" description="Helical; Name=7" evidence="2">
    <location>
        <begin position="262"/>
        <end position="282"/>
    </location>
</feature>
<feature type="topological domain" description="Cytoplasmic" evidence="2">
    <location>
        <begin position="283"/>
        <end position="330"/>
    </location>
</feature>
<feature type="region of interest" description="Disordered" evidence="4">
    <location>
        <begin position="304"/>
        <end position="330"/>
    </location>
</feature>
<feature type="compositionally biased region" description="Polar residues" evidence="4">
    <location>
        <begin position="307"/>
        <end position="330"/>
    </location>
</feature>
<feature type="glycosylation site" description="N-linked (GlcNAc...) asparagine" evidence="2">
    <location>
        <position position="4"/>
    </location>
</feature>
<feature type="glycosylation site" description="N-linked (GlcNAc...) asparagine" evidence="2">
    <location>
        <position position="154"/>
    </location>
</feature>
<feature type="disulfide bond" evidence="3">
    <location>
        <begin position="85"/>
        <end position="155"/>
    </location>
</feature>
<gene>
    <name type="primary">GPBAR1</name>
    <name type="synonym">TGR5</name>
</gene>
<dbReference type="EMBL" id="AB089309">
    <property type="protein sequence ID" value="BAC55237.1"/>
    <property type="molecule type" value="mRNA"/>
</dbReference>
<dbReference type="RefSeq" id="NP_001076117.1">
    <property type="nucleotide sequence ID" value="NM_001082648.1"/>
</dbReference>
<dbReference type="SMR" id="Q862A8"/>
<dbReference type="FunCoup" id="Q862A8">
    <property type="interactions" value="62"/>
</dbReference>
<dbReference type="STRING" id="9986.ENSOCUP00000004791"/>
<dbReference type="GlyCosmos" id="Q862A8">
    <property type="glycosylation" value="2 sites, No reported glycans"/>
</dbReference>
<dbReference type="PaxDb" id="9986-ENSOCUP00000004791"/>
<dbReference type="GeneID" id="100009346"/>
<dbReference type="KEGG" id="ocu:100009346"/>
<dbReference type="CTD" id="151306"/>
<dbReference type="eggNOG" id="ENOG502SQ0C">
    <property type="taxonomic scope" value="Eukaryota"/>
</dbReference>
<dbReference type="InParanoid" id="Q862A8"/>
<dbReference type="OrthoDB" id="8817982at2759"/>
<dbReference type="Proteomes" id="UP000001811">
    <property type="component" value="Unplaced"/>
</dbReference>
<dbReference type="GO" id="GO:0005886">
    <property type="term" value="C:plasma membrane"/>
    <property type="evidence" value="ECO:0007669"/>
    <property type="project" value="UniProtKB-SubCell"/>
</dbReference>
<dbReference type="GO" id="GO:0038182">
    <property type="term" value="F:G protein-coupled bile acid receptor activity"/>
    <property type="evidence" value="ECO:0007669"/>
    <property type="project" value="TreeGrafter"/>
</dbReference>
<dbReference type="Gene3D" id="1.20.1070.10">
    <property type="entry name" value="Rhodopsin 7-helix transmembrane proteins"/>
    <property type="match status" value="1"/>
</dbReference>
<dbReference type="InterPro" id="IPR000276">
    <property type="entry name" value="GPCR_Rhodpsn"/>
</dbReference>
<dbReference type="InterPro" id="IPR017452">
    <property type="entry name" value="GPCR_Rhodpsn_7TM"/>
</dbReference>
<dbReference type="PANTHER" id="PTHR24246:SF31">
    <property type="entry name" value="G-PROTEIN COUPLED BILE ACID RECEPTOR 1"/>
    <property type="match status" value="1"/>
</dbReference>
<dbReference type="PANTHER" id="PTHR24246">
    <property type="entry name" value="OLFACTORY RECEPTOR AND ADENOSINE RECEPTOR"/>
    <property type="match status" value="1"/>
</dbReference>
<dbReference type="Pfam" id="PF00001">
    <property type="entry name" value="7tm_1"/>
    <property type="match status" value="1"/>
</dbReference>
<dbReference type="SUPFAM" id="SSF81321">
    <property type="entry name" value="Family A G protein-coupled receptor-like"/>
    <property type="match status" value="1"/>
</dbReference>
<dbReference type="PROSITE" id="PS50262">
    <property type="entry name" value="G_PROTEIN_RECEP_F1_2"/>
    <property type="match status" value="1"/>
</dbReference>
<comment type="function">
    <text evidence="1">Receptor for bile acid. Bile-acid binding induces its internalization, activation of extracellular signal-regulated kinase and intracellular cAMP production. May be involved in the suppression of macrophage functions by bile acids. Involved in bile acid promoted GLP1R secretion (By similarity).</text>
</comment>
<comment type="subcellular location">
    <subcellularLocation>
        <location evidence="1">Cell membrane</location>
        <topology evidence="1">Multi-pass membrane protein</topology>
    </subcellularLocation>
</comment>
<comment type="tissue specificity">
    <text evidence="5">Expressed at high level in spleen. Expressed at lower level in thymus, heart, lung, liver, kidney, ileum, blood and adherent alveolar macrophage cells.</text>
</comment>
<comment type="similarity">
    <text evidence="3">Belongs to the G-protein coupled receptor 1 family.</text>
</comment>
<evidence type="ECO:0000250" key="1"/>
<evidence type="ECO:0000255" key="2"/>
<evidence type="ECO:0000255" key="3">
    <source>
        <dbReference type="PROSITE-ProRule" id="PRU00521"/>
    </source>
</evidence>
<evidence type="ECO:0000256" key="4">
    <source>
        <dbReference type="SAM" id="MobiDB-lite"/>
    </source>
</evidence>
<evidence type="ECO:0000269" key="5">
    <source>
    </source>
</evidence>